<keyword id="KW-0025">Alternative splicing</keyword>
<keyword id="KW-0083">Bardet-Biedl syndrome</keyword>
<keyword id="KW-1186">Ciliopathy</keyword>
<keyword id="KW-0175">Coiled coil</keyword>
<keyword id="KW-0963">Cytoplasm</keyword>
<keyword id="KW-0225">Disease variant</keyword>
<keyword id="KW-0550">Obesity</keyword>
<keyword id="KW-1267">Proteomics identification</keyword>
<keyword id="KW-1185">Reference proteome</keyword>
<feature type="chain" id="PRO_0000318757" description="Leucine zipper transcription factor-like protein 1">
    <location>
        <begin position="1"/>
        <end position="299"/>
    </location>
</feature>
<feature type="region of interest" description="Interaction with BSS9">
    <location>
        <begin position="145"/>
        <end position="299"/>
    </location>
</feature>
<feature type="coiled-coil region" evidence="1">
    <location>
        <begin position="96"/>
        <end position="296"/>
    </location>
</feature>
<feature type="splice variant" id="VSP_053428" description="In isoform 3." evidence="8">
    <original>MAELGLNEHHQNEVINYMRFARSKRGLRLKTVDSCFQDLKESR</original>
    <variation>MRNQDPGKMGRQRKSIKLYPTHPLVTFPRSWAKFQEKAL</variation>
    <location>
        <begin position="1"/>
        <end position="43"/>
    </location>
</feature>
<feature type="splice variant" id="VSP_053429" description="In isoform 2." evidence="8">
    <location>
        <begin position="1"/>
        <end position="17"/>
    </location>
</feature>
<feature type="splice variant" id="VSP_053430" description="In isoform 3." evidence="8">
    <original>ELEKKFQQTAAYRNMKEILTKKNDQIKDLRKRLAQYEPED</original>
    <variation>I</variation>
    <location>
        <begin position="260"/>
        <end position="299"/>
    </location>
</feature>
<feature type="sequence variant" id="VAR_070104" description="In BBS17; dbSNP:rs515726135." evidence="7">
    <original>L</original>
    <variation>P</variation>
    <location>
        <position position="87"/>
    </location>
</feature>
<feature type="sequence variant" id="VAR_038877" description="In dbSNP:rs17855512." evidence="3">
    <original>K</original>
    <variation>E</variation>
    <location>
        <position position="152"/>
    </location>
</feature>
<feature type="sequence variant" id="VAR_038878" description="In dbSNP:rs1129183." evidence="2">
    <original>D</original>
    <variation>N</variation>
    <location>
        <position position="246"/>
    </location>
</feature>
<feature type="sequence variant" id="VAR_038879" description="In dbSNP:rs17852322." evidence="3">
    <original>Q</original>
    <variation>R</variation>
    <location>
        <position position="251"/>
    </location>
</feature>
<feature type="mutagenesis site" description="Increases BBS4, BBS8 and BBS9 ciliary localization." evidence="5">
    <original>KR</original>
    <variation>AS</variation>
    <location>
        <begin position="24"/>
        <end position="25"/>
    </location>
</feature>
<feature type="sequence conflict" description="In Ref. 6; AAH25988." evidence="9" ref="6">
    <original>R</original>
    <variation>Q</variation>
    <location>
        <position position="108"/>
    </location>
</feature>
<feature type="sequence conflict" description="In Ref. 3; BAG64469." evidence="9" ref="3">
    <original>K</original>
    <variation>R</variation>
    <location>
        <position position="224"/>
    </location>
</feature>
<protein>
    <recommendedName>
        <fullName>Leucine zipper transcription factor-like protein 1</fullName>
    </recommendedName>
</protein>
<sequence>MAELGLNEHHQNEVINYMRFARSKRGLRLKTVDSCFQDLKESRLVEDTFTIDEVSEVLNGLQAVVHSEVESELINTAYTNVLLLRQLFAQAEKWYLKLQTDISELENRELLEQVAEFEKAEITSSNKKPILDVTKPKLAPLNEGGTAELLNKEILRLQEENEKLKSRLKTIEIQATNALDEKSKLEKALQDLQLDQGNQKDFIKAQDLSNLENTVAALKSEFQKTLNDKTENQKSLEENLATAKHDLLRVQEQLHMAEKELEKKFQQTAAYRNMKEILTKKNDQIKDLRKRLAQYEPED</sequence>
<comment type="function">
    <text evidence="4 5 6">Regulates ciliary localization of the BBSome complex. Together with the BBSome complex, controls SMO ciliary trafficking and contributes to the sonic hedgehog (SHH) pathway regulation. May play a role in neurite outgrowth. May have tumor suppressor function.</text>
</comment>
<comment type="subunit">
    <text evidence="5">Self-associates. Interacts with BBS9; the interaction mediates the association of LZTL1 with the BBsome complex and regulates BBSome ciliary trafficking.</text>
</comment>
<comment type="interaction">
    <interactant intactId="EBI-2824799">
        <id>Q9NQ48</id>
    </interactant>
    <interactant intactId="EBI-2826852">
        <id>Q3SYG4</id>
        <label>BBS9</label>
    </interactant>
    <organismsDiffer>false</organismsDiffer>
    <experiments>10</experiments>
</comment>
<comment type="interaction">
    <interactant intactId="EBI-2824799">
        <id>Q9NQ48</id>
    </interactant>
    <interactant intactId="EBI-2339219">
        <id>Q08426</id>
        <label>EHHADH</label>
    </interactant>
    <organismsDiffer>false</organismsDiffer>
    <experiments>3</experiments>
</comment>
<comment type="interaction">
    <interactant intactId="EBI-2824799">
        <id>Q9NQ48</id>
    </interactant>
    <interactant intactId="EBI-2824799">
        <id>Q9NQ48</id>
        <label>LZTFL1</label>
    </interactant>
    <organismsDiffer>false</organismsDiffer>
    <experiments>18</experiments>
</comment>
<comment type="interaction">
    <interactant intactId="EBI-2824799">
        <id>Q9NQ48</id>
    </interactant>
    <interactant intactId="EBI-748229">
        <id>Q9H8S9</id>
        <label>MOB1A</label>
    </interactant>
    <organismsDiffer>false</organismsDiffer>
    <experiments>3</experiments>
</comment>
<comment type="interaction">
    <interactant intactId="EBI-2824799">
        <id>Q9NQ48</id>
    </interactant>
    <interactant intactId="EBI-741158">
        <id>Q96HA8</id>
        <label>NTAQ1</label>
    </interactant>
    <organismsDiffer>false</organismsDiffer>
    <experiments>4</experiments>
</comment>
<comment type="interaction">
    <interactant intactId="EBI-2824799">
        <id>Q9NQ48</id>
    </interactant>
    <interactant intactId="EBI-448407">
        <id>Q9HAT8</id>
        <label>PELI2</label>
    </interactant>
    <organismsDiffer>false</organismsDiffer>
    <experiments>3</experiments>
</comment>
<comment type="interaction">
    <interactant intactId="EBI-2824799">
        <id>Q9NQ48</id>
    </interactant>
    <interactant intactId="EBI-79165">
        <id>Q9NRD5</id>
        <label>PICK1</label>
    </interactant>
    <organismsDiffer>false</organismsDiffer>
    <experiments>5</experiments>
</comment>
<comment type="interaction">
    <interactant intactId="EBI-2824799">
        <id>Q9NQ48</id>
    </interactant>
    <interactant intactId="EBI-359352">
        <id>P25786</id>
        <label>PSMA1</label>
    </interactant>
    <organismsDiffer>false</organismsDiffer>
    <experiments>3</experiments>
</comment>
<comment type="interaction">
    <interactant intactId="EBI-2824799">
        <id>Q9NQ48</id>
    </interactant>
    <interactant intactId="EBI-372273">
        <id>P20618</id>
        <label>PSMB1</label>
    </interactant>
    <organismsDiffer>false</organismsDiffer>
    <experiments>3</experiments>
</comment>
<comment type="interaction">
    <interactant intactId="EBI-2824799">
        <id>Q9NQ48</id>
    </interactant>
    <interactant intactId="EBI-727004">
        <id>O00560</id>
        <label>SDCBP</label>
    </interactant>
    <organismsDiffer>false</organismsDiffer>
    <experiments>6</experiments>
</comment>
<comment type="interaction">
    <interactant intactId="EBI-2824799">
        <id>Q9NQ48</id>
    </interactant>
    <interactant intactId="EBI-2130449">
        <id>Q6AZZ1</id>
        <label>TRIM68</label>
    </interactant>
    <organismsDiffer>false</organismsDiffer>
    <experiments>3</experiments>
</comment>
<comment type="subcellular location">
    <subcellularLocation>
        <location evidence="4 5">Cytoplasm</location>
    </subcellularLocation>
</comment>
<comment type="alternative products">
    <event type="alternative splicing"/>
    <isoform>
        <id>Q9NQ48-1</id>
        <name>1</name>
        <sequence type="displayed"/>
    </isoform>
    <isoform>
        <id>Q9NQ48-2</id>
        <name>2</name>
        <sequence type="described" ref="VSP_053429"/>
    </isoform>
    <isoform>
        <id>Q9NQ48-3</id>
        <name>3</name>
        <sequence type="described" ref="VSP_053428 VSP_053430"/>
    </isoform>
</comment>
<comment type="tissue specificity">
    <text evidence="2 4">Expressed in prostate, ovary, stomach, pancreas, esophagus, breast, liver, bladder, kidney, thyroid, colon and lung (at protein level). Down-regulated in multiple primary tumors (at protein level). Detected in testis, heart, skeletal muscle, thymus, spleen, small intestine, and peripheral blood leukocytes.</text>
</comment>
<comment type="developmental stage">
    <text evidence="2">Expressed in brain, lung, liver, and kidney.</text>
</comment>
<comment type="disease" evidence="6 7">
    <disease id="DI-04076">
        <name>Bardet-Biedl syndrome 17</name>
        <acronym>BBS17</acronym>
        <description>A syndrome characterized by usually severe pigmentary retinopathy, early-onset obesity, polydactyly, hypogenitalism, renal malformation and intellectual disability. Secondary features include diabetes mellitus, hypertension and congenital heart disease. Bardet-Biedl syndrome inheritance is autosomal recessive, but three mutated alleles (two at one locus, and a third at a second locus) may be required for clinical manifestation of some forms of the disease.</description>
        <dbReference type="MIM" id="615994"/>
    </disease>
    <text evidence="6">The disease is caused by variants affecting the gene represented in this entry. Patients carrying LZTFL1 mutations manifest mesoaxial polydactyly, a clinical feature very uncommon for Bardet-Biedl syndrome (PubMed:22510444, PubMed:23692385). Some patients manifest situs inversus (PubMed:22510444).</text>
</comment>
<comment type="similarity">
    <text evidence="9">Belongs to the LZTFL1 family.</text>
</comment>
<organism>
    <name type="scientific">Homo sapiens</name>
    <name type="common">Human</name>
    <dbReference type="NCBI Taxonomy" id="9606"/>
    <lineage>
        <taxon>Eukaryota</taxon>
        <taxon>Metazoa</taxon>
        <taxon>Chordata</taxon>
        <taxon>Craniata</taxon>
        <taxon>Vertebrata</taxon>
        <taxon>Euteleostomi</taxon>
        <taxon>Mammalia</taxon>
        <taxon>Eutheria</taxon>
        <taxon>Euarchontoglires</taxon>
        <taxon>Primates</taxon>
        <taxon>Haplorrhini</taxon>
        <taxon>Catarrhini</taxon>
        <taxon>Hominidae</taxon>
        <taxon>Homo</taxon>
    </lineage>
</organism>
<accession>Q9NQ48</accession>
<accession>B3KSI9</accession>
<accession>B4E0K7</accession>
<accession>Q8TC61</accession>
<accession>Q9NQ56</accession>
<gene>
    <name type="primary">LZTFL1</name>
</gene>
<dbReference type="EMBL" id="AJ289880">
    <property type="protein sequence ID" value="CAB96873.1"/>
    <property type="molecule type" value="Genomic_DNA"/>
</dbReference>
<dbReference type="EMBL" id="AJ297351">
    <property type="protein sequence ID" value="CAB95836.1"/>
    <property type="molecule type" value="mRNA"/>
</dbReference>
<dbReference type="EMBL" id="BX640604">
    <property type="protein sequence ID" value="CAE45710.1"/>
    <property type="molecule type" value="mRNA"/>
</dbReference>
<dbReference type="EMBL" id="AK093705">
    <property type="protein sequence ID" value="BAG52751.1"/>
    <property type="molecule type" value="mRNA"/>
</dbReference>
<dbReference type="EMBL" id="AK303416">
    <property type="protein sequence ID" value="BAG64469.1"/>
    <property type="molecule type" value="mRNA"/>
</dbReference>
<dbReference type="EMBL" id="AC098476">
    <property type="status" value="NOT_ANNOTATED_CDS"/>
    <property type="molecule type" value="Genomic_DNA"/>
</dbReference>
<dbReference type="EMBL" id="AC099782">
    <property type="status" value="NOT_ANNOTATED_CDS"/>
    <property type="molecule type" value="Genomic_DNA"/>
</dbReference>
<dbReference type="EMBL" id="CH471055">
    <property type="protein sequence ID" value="EAW64749.1"/>
    <property type="molecule type" value="Genomic_DNA"/>
</dbReference>
<dbReference type="EMBL" id="CH471055">
    <property type="protein sequence ID" value="EAW64750.1"/>
    <property type="molecule type" value="Genomic_DNA"/>
</dbReference>
<dbReference type="EMBL" id="BC025988">
    <property type="protein sequence ID" value="AAH25988.1"/>
    <property type="molecule type" value="mRNA"/>
</dbReference>
<dbReference type="EMBL" id="BC042483">
    <property type="protein sequence ID" value="AAH42483.1"/>
    <property type="molecule type" value="mRNA"/>
</dbReference>
<dbReference type="CCDS" id="CCDS2731.1">
    <molecule id="Q9NQ48-1"/>
</dbReference>
<dbReference type="CCDS" id="CCDS63608.1">
    <molecule id="Q9NQ48-2"/>
</dbReference>
<dbReference type="CCDS" id="CCDS63609.1">
    <molecule id="Q9NQ48-3"/>
</dbReference>
<dbReference type="RefSeq" id="NP_001263307.1">
    <molecule id="Q9NQ48-2"/>
    <property type="nucleotide sequence ID" value="NM_001276378.2"/>
</dbReference>
<dbReference type="RefSeq" id="NP_001263308.1">
    <molecule id="Q9NQ48-3"/>
    <property type="nucleotide sequence ID" value="NM_001276379.2"/>
</dbReference>
<dbReference type="RefSeq" id="NP_001373380.1">
    <molecule id="Q9NQ48-2"/>
    <property type="nucleotide sequence ID" value="NM_001386451.1"/>
</dbReference>
<dbReference type="RefSeq" id="NP_001392851.1">
    <molecule id="Q9NQ48-2"/>
    <property type="nucleotide sequence ID" value="NM_001405922.1"/>
</dbReference>
<dbReference type="RefSeq" id="NP_001392852.1">
    <molecule id="Q9NQ48-2"/>
    <property type="nucleotide sequence ID" value="NM_001405923.1"/>
</dbReference>
<dbReference type="RefSeq" id="NP_065080.1">
    <molecule id="Q9NQ48-1"/>
    <property type="nucleotide sequence ID" value="NM_020347.4"/>
</dbReference>
<dbReference type="RefSeq" id="XP_011532140.1">
    <property type="nucleotide sequence ID" value="XM_011533838.2"/>
</dbReference>
<dbReference type="RefSeq" id="XP_016862133.1">
    <property type="nucleotide sequence ID" value="XM_017006644.1"/>
</dbReference>
<dbReference type="SMR" id="Q9NQ48"/>
<dbReference type="BioGRID" id="120062">
    <property type="interactions" value="50"/>
</dbReference>
<dbReference type="CORUM" id="Q9NQ48"/>
<dbReference type="FunCoup" id="Q9NQ48">
    <property type="interactions" value="1747"/>
</dbReference>
<dbReference type="IntAct" id="Q9NQ48">
    <property type="interactions" value="31"/>
</dbReference>
<dbReference type="STRING" id="9606.ENSP00000296135"/>
<dbReference type="iPTMnet" id="Q9NQ48"/>
<dbReference type="PhosphoSitePlus" id="Q9NQ48"/>
<dbReference type="BioMuta" id="LZTFL1"/>
<dbReference type="DMDM" id="74734310"/>
<dbReference type="REPRODUCTION-2DPAGE" id="IPI00478250"/>
<dbReference type="jPOST" id="Q9NQ48"/>
<dbReference type="MassIVE" id="Q9NQ48"/>
<dbReference type="PaxDb" id="9606-ENSP00000296135"/>
<dbReference type="PeptideAtlas" id="Q9NQ48"/>
<dbReference type="ProteomicsDB" id="3643"/>
<dbReference type="ProteomicsDB" id="82080">
    <molecule id="Q9NQ48-1"/>
</dbReference>
<dbReference type="Pumba" id="Q9NQ48"/>
<dbReference type="Antibodypedia" id="29604">
    <property type="antibodies" value="266 antibodies from 28 providers"/>
</dbReference>
<dbReference type="DNASU" id="54585"/>
<dbReference type="Ensembl" id="ENST00000296135.11">
    <molecule id="Q9NQ48-1"/>
    <property type="protein sequence ID" value="ENSP00000296135.6"/>
    <property type="gene ID" value="ENSG00000163818.20"/>
</dbReference>
<dbReference type="Ensembl" id="ENST00000539217.5">
    <molecule id="Q9NQ48-3"/>
    <property type="protein sequence ID" value="ENSP00000441784.1"/>
    <property type="gene ID" value="ENSG00000163818.20"/>
</dbReference>
<dbReference type="Ensembl" id="ENST00000684620.1">
    <molecule id="Q9NQ48-2"/>
    <property type="protein sequence ID" value="ENSP00000506925.1"/>
    <property type="gene ID" value="ENSG00000163818.20"/>
</dbReference>
<dbReference type="GeneID" id="54585"/>
<dbReference type="KEGG" id="hsa:54585"/>
<dbReference type="MANE-Select" id="ENST00000296135.11">
    <property type="protein sequence ID" value="ENSP00000296135.6"/>
    <property type="RefSeq nucleotide sequence ID" value="NM_020347.4"/>
    <property type="RefSeq protein sequence ID" value="NP_065080.1"/>
</dbReference>
<dbReference type="UCSC" id="uc003cox.3">
    <molecule id="Q9NQ48-1"/>
    <property type="organism name" value="human"/>
</dbReference>
<dbReference type="AGR" id="HGNC:6741"/>
<dbReference type="CTD" id="54585"/>
<dbReference type="DisGeNET" id="54585"/>
<dbReference type="GeneCards" id="LZTFL1"/>
<dbReference type="GeneReviews" id="LZTFL1"/>
<dbReference type="HGNC" id="HGNC:6741">
    <property type="gene designation" value="LZTFL1"/>
</dbReference>
<dbReference type="HPA" id="ENSG00000163818">
    <property type="expression patterns" value="Low tissue specificity"/>
</dbReference>
<dbReference type="MalaCards" id="LZTFL1"/>
<dbReference type="MIM" id="606568">
    <property type="type" value="gene"/>
</dbReference>
<dbReference type="MIM" id="615994">
    <property type="type" value="phenotype"/>
</dbReference>
<dbReference type="neXtProt" id="NX_Q9NQ48"/>
<dbReference type="OpenTargets" id="ENSG00000163818"/>
<dbReference type="Orphanet" id="110">
    <property type="disease" value="Bardet-Biedl syndrome"/>
</dbReference>
<dbReference type="PharmGKB" id="PA30505"/>
<dbReference type="VEuPathDB" id="HostDB:ENSG00000163818"/>
<dbReference type="eggNOG" id="ENOG502QRGB">
    <property type="taxonomic scope" value="Eukaryota"/>
</dbReference>
<dbReference type="GeneTree" id="ENSGT00390000016415"/>
<dbReference type="HOGENOM" id="CLU_083519_0_0_1"/>
<dbReference type="InParanoid" id="Q9NQ48"/>
<dbReference type="OMA" id="QMEGTTA"/>
<dbReference type="OrthoDB" id="313412at2759"/>
<dbReference type="PAN-GO" id="Q9NQ48">
    <property type="GO annotations" value="2 GO annotations based on evolutionary models"/>
</dbReference>
<dbReference type="PhylomeDB" id="Q9NQ48"/>
<dbReference type="TreeFam" id="TF329023"/>
<dbReference type="PathwayCommons" id="Q9NQ48"/>
<dbReference type="Reactome" id="R-HSA-5620922">
    <property type="pathway name" value="BBSome-mediated cargo-targeting to cilium"/>
</dbReference>
<dbReference type="SignaLink" id="Q9NQ48"/>
<dbReference type="BioGRID-ORCS" id="54585">
    <property type="hits" value="6 hits in 1157 CRISPR screens"/>
</dbReference>
<dbReference type="ChiTaRS" id="LZTFL1">
    <property type="organism name" value="human"/>
</dbReference>
<dbReference type="GenomeRNAi" id="54585"/>
<dbReference type="Pharos" id="Q9NQ48">
    <property type="development level" value="Tbio"/>
</dbReference>
<dbReference type="PRO" id="PR:Q9NQ48"/>
<dbReference type="Proteomes" id="UP000005640">
    <property type="component" value="Chromosome 3"/>
</dbReference>
<dbReference type="RNAct" id="Q9NQ48">
    <property type="molecule type" value="protein"/>
</dbReference>
<dbReference type="Bgee" id="ENSG00000163818">
    <property type="expression patterns" value="Expressed in bronchial epithelial cell and 199 other cell types or tissues"/>
</dbReference>
<dbReference type="ExpressionAtlas" id="Q9NQ48">
    <property type="expression patterns" value="baseline and differential"/>
</dbReference>
<dbReference type="GO" id="GO:0005929">
    <property type="term" value="C:cilium"/>
    <property type="evidence" value="ECO:0000314"/>
    <property type="project" value="HPA"/>
</dbReference>
<dbReference type="GO" id="GO:0005737">
    <property type="term" value="C:cytoplasm"/>
    <property type="evidence" value="ECO:0000318"/>
    <property type="project" value="GO_Central"/>
</dbReference>
<dbReference type="GO" id="GO:0005829">
    <property type="term" value="C:cytosol"/>
    <property type="evidence" value="ECO:0000314"/>
    <property type="project" value="HPA"/>
</dbReference>
<dbReference type="GO" id="GO:0002177">
    <property type="term" value="C:manchette"/>
    <property type="evidence" value="ECO:0007669"/>
    <property type="project" value="Ensembl"/>
</dbReference>
<dbReference type="GO" id="GO:0042802">
    <property type="term" value="F:identical protein binding"/>
    <property type="evidence" value="ECO:0000353"/>
    <property type="project" value="IntAct"/>
</dbReference>
<dbReference type="GO" id="GO:0044877">
    <property type="term" value="F:protein-containing complex binding"/>
    <property type="evidence" value="ECO:0000314"/>
    <property type="project" value="UniProtKB"/>
</dbReference>
<dbReference type="GO" id="GO:0030317">
    <property type="term" value="P:flagellated sperm motility"/>
    <property type="evidence" value="ECO:0007669"/>
    <property type="project" value="Ensembl"/>
</dbReference>
<dbReference type="GO" id="GO:1903568">
    <property type="term" value="P:negative regulation of protein localization to ciliary membrane"/>
    <property type="evidence" value="ECO:0000315"/>
    <property type="project" value="GO_Central"/>
</dbReference>
<dbReference type="GO" id="GO:1903565">
    <property type="term" value="P:negative regulation of protein localization to cilium"/>
    <property type="evidence" value="ECO:0000315"/>
    <property type="project" value="GO_Central"/>
</dbReference>
<dbReference type="GO" id="GO:0007283">
    <property type="term" value="P:spermatogenesis"/>
    <property type="evidence" value="ECO:0007669"/>
    <property type="project" value="Ensembl"/>
</dbReference>
<dbReference type="InterPro" id="IPR026157">
    <property type="entry name" value="LZTFL1"/>
</dbReference>
<dbReference type="PANTHER" id="PTHR21635">
    <property type="entry name" value="LEUCINE ZIPPER TRANSCRIPTION FACTOR LIKE"/>
    <property type="match status" value="1"/>
</dbReference>
<dbReference type="PANTHER" id="PTHR21635:SF0">
    <property type="entry name" value="LEUCINE ZIPPER TRANSCRIPTION FACTOR-LIKE PROTEIN 1"/>
    <property type="match status" value="1"/>
</dbReference>
<dbReference type="Pfam" id="PF15294">
    <property type="entry name" value="Leu_zip"/>
    <property type="match status" value="1"/>
</dbReference>
<proteinExistence type="evidence at protein level"/>
<evidence type="ECO:0000255" key="1"/>
<evidence type="ECO:0000269" key="2">
    <source>
    </source>
</evidence>
<evidence type="ECO:0000269" key="3">
    <source>
    </source>
</evidence>
<evidence type="ECO:0000269" key="4">
    <source>
    </source>
</evidence>
<evidence type="ECO:0000269" key="5">
    <source>
    </source>
</evidence>
<evidence type="ECO:0000269" key="6">
    <source>
    </source>
</evidence>
<evidence type="ECO:0000269" key="7">
    <source>
    </source>
</evidence>
<evidence type="ECO:0000303" key="8">
    <source>
    </source>
</evidence>
<evidence type="ECO:0000305" key="9"/>
<reference key="1">
    <citation type="journal article" date="2001" name="Genomics">
        <title>The LZTFL1 gene is a part of a transcriptional map covering 250 kb within the common eliminated region 1 (C3CER1) in 3p21.3.</title>
        <authorList>
            <person name="Kiss H."/>
            <person name="Kedra D."/>
            <person name="Kiss C."/>
            <person name="Kost-Alimova M."/>
            <person name="Yang Y."/>
            <person name="Klein G."/>
            <person name="Imreh S."/>
            <person name="Dumanski J.P."/>
        </authorList>
    </citation>
    <scope>NUCLEOTIDE SEQUENCE [GENOMIC DNA / MRNA] (ISOFORM 1)</scope>
    <scope>TISSUE SPECIFICITY</scope>
    <scope>DEVELOPMENTAL STAGE</scope>
    <scope>VARIANT ASN-246</scope>
    <source>
        <tissue>Testis</tissue>
    </source>
</reference>
<reference key="2">
    <citation type="journal article" date="2007" name="BMC Genomics">
        <title>The full-ORF clone resource of the German cDNA consortium.</title>
        <authorList>
            <person name="Bechtel S."/>
            <person name="Rosenfelder H."/>
            <person name="Duda A."/>
            <person name="Schmidt C.P."/>
            <person name="Ernst U."/>
            <person name="Wellenreuther R."/>
            <person name="Mehrle A."/>
            <person name="Schuster C."/>
            <person name="Bahr A."/>
            <person name="Bloecker H."/>
            <person name="Heubner D."/>
            <person name="Hoerlein A."/>
            <person name="Michel G."/>
            <person name="Wedler H."/>
            <person name="Koehrer K."/>
            <person name="Ottenwaelder B."/>
            <person name="Poustka A."/>
            <person name="Wiemann S."/>
            <person name="Schupp I."/>
        </authorList>
    </citation>
    <scope>NUCLEOTIDE SEQUENCE [LARGE SCALE MRNA] (ISOFORM 1)</scope>
    <source>
        <tissue>Endometrial adenocarcinoma</tissue>
    </source>
</reference>
<reference key="3">
    <citation type="journal article" date="2004" name="Nat. Genet.">
        <title>Complete sequencing and characterization of 21,243 full-length human cDNAs.</title>
        <authorList>
            <person name="Ota T."/>
            <person name="Suzuki Y."/>
            <person name="Nishikawa T."/>
            <person name="Otsuki T."/>
            <person name="Sugiyama T."/>
            <person name="Irie R."/>
            <person name="Wakamatsu A."/>
            <person name="Hayashi K."/>
            <person name="Sato H."/>
            <person name="Nagai K."/>
            <person name="Kimura K."/>
            <person name="Makita H."/>
            <person name="Sekine M."/>
            <person name="Obayashi M."/>
            <person name="Nishi T."/>
            <person name="Shibahara T."/>
            <person name="Tanaka T."/>
            <person name="Ishii S."/>
            <person name="Yamamoto J."/>
            <person name="Saito K."/>
            <person name="Kawai Y."/>
            <person name="Isono Y."/>
            <person name="Nakamura Y."/>
            <person name="Nagahari K."/>
            <person name="Murakami K."/>
            <person name="Yasuda T."/>
            <person name="Iwayanagi T."/>
            <person name="Wagatsuma M."/>
            <person name="Shiratori A."/>
            <person name="Sudo H."/>
            <person name="Hosoiri T."/>
            <person name="Kaku Y."/>
            <person name="Kodaira H."/>
            <person name="Kondo H."/>
            <person name="Sugawara M."/>
            <person name="Takahashi M."/>
            <person name="Kanda K."/>
            <person name="Yokoi T."/>
            <person name="Furuya T."/>
            <person name="Kikkawa E."/>
            <person name="Omura Y."/>
            <person name="Abe K."/>
            <person name="Kamihara K."/>
            <person name="Katsuta N."/>
            <person name="Sato K."/>
            <person name="Tanikawa M."/>
            <person name="Yamazaki M."/>
            <person name="Ninomiya K."/>
            <person name="Ishibashi T."/>
            <person name="Yamashita H."/>
            <person name="Murakawa K."/>
            <person name="Fujimori K."/>
            <person name="Tanai H."/>
            <person name="Kimata M."/>
            <person name="Watanabe M."/>
            <person name="Hiraoka S."/>
            <person name="Chiba Y."/>
            <person name="Ishida S."/>
            <person name="Ono Y."/>
            <person name="Takiguchi S."/>
            <person name="Watanabe S."/>
            <person name="Yosida M."/>
            <person name="Hotuta T."/>
            <person name="Kusano J."/>
            <person name="Kanehori K."/>
            <person name="Takahashi-Fujii A."/>
            <person name="Hara H."/>
            <person name="Tanase T.-O."/>
            <person name="Nomura Y."/>
            <person name="Togiya S."/>
            <person name="Komai F."/>
            <person name="Hara R."/>
            <person name="Takeuchi K."/>
            <person name="Arita M."/>
            <person name="Imose N."/>
            <person name="Musashino K."/>
            <person name="Yuuki H."/>
            <person name="Oshima A."/>
            <person name="Sasaki N."/>
            <person name="Aotsuka S."/>
            <person name="Yoshikawa Y."/>
            <person name="Matsunawa H."/>
            <person name="Ichihara T."/>
            <person name="Shiohata N."/>
            <person name="Sano S."/>
            <person name="Moriya S."/>
            <person name="Momiyama H."/>
            <person name="Satoh N."/>
            <person name="Takami S."/>
            <person name="Terashima Y."/>
            <person name="Suzuki O."/>
            <person name="Nakagawa S."/>
            <person name="Senoh A."/>
            <person name="Mizoguchi H."/>
            <person name="Goto Y."/>
            <person name="Shimizu F."/>
            <person name="Wakebe H."/>
            <person name="Hishigaki H."/>
            <person name="Watanabe T."/>
            <person name="Sugiyama A."/>
            <person name="Takemoto M."/>
            <person name="Kawakami B."/>
            <person name="Yamazaki M."/>
            <person name="Watanabe K."/>
            <person name="Kumagai A."/>
            <person name="Itakura S."/>
            <person name="Fukuzumi Y."/>
            <person name="Fujimori Y."/>
            <person name="Komiyama M."/>
            <person name="Tashiro H."/>
            <person name="Tanigami A."/>
            <person name="Fujiwara T."/>
            <person name="Ono T."/>
            <person name="Yamada K."/>
            <person name="Fujii Y."/>
            <person name="Ozaki K."/>
            <person name="Hirao M."/>
            <person name="Ohmori Y."/>
            <person name="Kawabata A."/>
            <person name="Hikiji T."/>
            <person name="Kobatake N."/>
            <person name="Inagaki H."/>
            <person name="Ikema Y."/>
            <person name="Okamoto S."/>
            <person name="Okitani R."/>
            <person name="Kawakami T."/>
            <person name="Noguchi S."/>
            <person name="Itoh T."/>
            <person name="Shigeta K."/>
            <person name="Senba T."/>
            <person name="Matsumura K."/>
            <person name="Nakajima Y."/>
            <person name="Mizuno T."/>
            <person name="Morinaga M."/>
            <person name="Sasaki M."/>
            <person name="Togashi T."/>
            <person name="Oyama M."/>
            <person name="Hata H."/>
            <person name="Watanabe M."/>
            <person name="Komatsu T."/>
            <person name="Mizushima-Sugano J."/>
            <person name="Satoh T."/>
            <person name="Shirai Y."/>
            <person name="Takahashi Y."/>
            <person name="Nakagawa K."/>
            <person name="Okumura K."/>
            <person name="Nagase T."/>
            <person name="Nomura N."/>
            <person name="Kikuchi H."/>
            <person name="Masuho Y."/>
            <person name="Yamashita R."/>
            <person name="Nakai K."/>
            <person name="Yada T."/>
            <person name="Nakamura Y."/>
            <person name="Ohara O."/>
            <person name="Isogai T."/>
            <person name="Sugano S."/>
        </authorList>
    </citation>
    <scope>NUCLEOTIDE SEQUENCE [LARGE SCALE MRNA] (ISOFORMS 2 AND 3)</scope>
</reference>
<reference key="4">
    <citation type="journal article" date="2006" name="Nature">
        <title>The DNA sequence, annotation and analysis of human chromosome 3.</title>
        <authorList>
            <person name="Muzny D.M."/>
            <person name="Scherer S.E."/>
            <person name="Kaul R."/>
            <person name="Wang J."/>
            <person name="Yu J."/>
            <person name="Sudbrak R."/>
            <person name="Buhay C.J."/>
            <person name="Chen R."/>
            <person name="Cree A."/>
            <person name="Ding Y."/>
            <person name="Dugan-Rocha S."/>
            <person name="Gill R."/>
            <person name="Gunaratne P."/>
            <person name="Harris R.A."/>
            <person name="Hawes A.C."/>
            <person name="Hernandez J."/>
            <person name="Hodgson A.V."/>
            <person name="Hume J."/>
            <person name="Jackson A."/>
            <person name="Khan Z.M."/>
            <person name="Kovar-Smith C."/>
            <person name="Lewis L.R."/>
            <person name="Lozado R.J."/>
            <person name="Metzker M.L."/>
            <person name="Milosavljevic A."/>
            <person name="Miner G.R."/>
            <person name="Morgan M.B."/>
            <person name="Nazareth L.V."/>
            <person name="Scott G."/>
            <person name="Sodergren E."/>
            <person name="Song X.-Z."/>
            <person name="Steffen D."/>
            <person name="Wei S."/>
            <person name="Wheeler D.A."/>
            <person name="Wright M.W."/>
            <person name="Worley K.C."/>
            <person name="Yuan Y."/>
            <person name="Zhang Z."/>
            <person name="Adams C.Q."/>
            <person name="Ansari-Lari M.A."/>
            <person name="Ayele M."/>
            <person name="Brown M.J."/>
            <person name="Chen G."/>
            <person name="Chen Z."/>
            <person name="Clendenning J."/>
            <person name="Clerc-Blankenburg K.P."/>
            <person name="Chen R."/>
            <person name="Chen Z."/>
            <person name="Davis C."/>
            <person name="Delgado O."/>
            <person name="Dinh H.H."/>
            <person name="Dong W."/>
            <person name="Draper H."/>
            <person name="Ernst S."/>
            <person name="Fu G."/>
            <person name="Gonzalez-Garay M.L."/>
            <person name="Garcia D.K."/>
            <person name="Gillett W."/>
            <person name="Gu J."/>
            <person name="Hao B."/>
            <person name="Haugen E."/>
            <person name="Havlak P."/>
            <person name="He X."/>
            <person name="Hennig S."/>
            <person name="Hu S."/>
            <person name="Huang W."/>
            <person name="Jackson L.R."/>
            <person name="Jacob L.S."/>
            <person name="Kelly S.H."/>
            <person name="Kube M."/>
            <person name="Levy R."/>
            <person name="Li Z."/>
            <person name="Liu B."/>
            <person name="Liu J."/>
            <person name="Liu W."/>
            <person name="Lu J."/>
            <person name="Maheshwari M."/>
            <person name="Nguyen B.-V."/>
            <person name="Okwuonu G.O."/>
            <person name="Palmeiri A."/>
            <person name="Pasternak S."/>
            <person name="Perez L.M."/>
            <person name="Phelps K.A."/>
            <person name="Plopper F.J."/>
            <person name="Qiang B."/>
            <person name="Raymond C."/>
            <person name="Rodriguez R."/>
            <person name="Saenphimmachak C."/>
            <person name="Santibanez J."/>
            <person name="Shen H."/>
            <person name="Shen Y."/>
            <person name="Subramanian S."/>
            <person name="Tabor P.E."/>
            <person name="Verduzco D."/>
            <person name="Waldron L."/>
            <person name="Wang J."/>
            <person name="Wang J."/>
            <person name="Wang Q."/>
            <person name="Williams G.A."/>
            <person name="Wong G.K.-S."/>
            <person name="Yao Z."/>
            <person name="Zhang J."/>
            <person name="Zhang X."/>
            <person name="Zhao G."/>
            <person name="Zhou J."/>
            <person name="Zhou Y."/>
            <person name="Nelson D."/>
            <person name="Lehrach H."/>
            <person name="Reinhardt R."/>
            <person name="Naylor S.L."/>
            <person name="Yang H."/>
            <person name="Olson M."/>
            <person name="Weinstock G."/>
            <person name="Gibbs R.A."/>
        </authorList>
    </citation>
    <scope>NUCLEOTIDE SEQUENCE [LARGE SCALE GENOMIC DNA]</scope>
</reference>
<reference key="5">
    <citation type="submission" date="2005-07" db="EMBL/GenBank/DDBJ databases">
        <authorList>
            <person name="Mural R.J."/>
            <person name="Istrail S."/>
            <person name="Sutton G.G."/>
            <person name="Florea L."/>
            <person name="Halpern A.L."/>
            <person name="Mobarry C.M."/>
            <person name="Lippert R."/>
            <person name="Walenz B."/>
            <person name="Shatkay H."/>
            <person name="Dew I."/>
            <person name="Miller J.R."/>
            <person name="Flanigan M.J."/>
            <person name="Edwards N.J."/>
            <person name="Bolanos R."/>
            <person name="Fasulo D."/>
            <person name="Halldorsson B.V."/>
            <person name="Hannenhalli S."/>
            <person name="Turner R."/>
            <person name="Yooseph S."/>
            <person name="Lu F."/>
            <person name="Nusskern D.R."/>
            <person name="Shue B.C."/>
            <person name="Zheng X.H."/>
            <person name="Zhong F."/>
            <person name="Delcher A.L."/>
            <person name="Huson D.H."/>
            <person name="Kravitz S.A."/>
            <person name="Mouchard L."/>
            <person name="Reinert K."/>
            <person name="Remington K.A."/>
            <person name="Clark A.G."/>
            <person name="Waterman M.S."/>
            <person name="Eichler E.E."/>
            <person name="Adams M.D."/>
            <person name="Hunkapiller M.W."/>
            <person name="Myers E.W."/>
            <person name="Venter J.C."/>
        </authorList>
    </citation>
    <scope>NUCLEOTIDE SEQUENCE [LARGE SCALE GENOMIC DNA]</scope>
</reference>
<reference key="6">
    <citation type="journal article" date="2004" name="Genome Res.">
        <title>The status, quality, and expansion of the NIH full-length cDNA project: the Mammalian Gene Collection (MGC).</title>
        <authorList>
            <consortium name="The MGC Project Team"/>
        </authorList>
    </citation>
    <scope>NUCLEOTIDE SEQUENCE [LARGE SCALE MRNA] (ISOFORM 1)</scope>
    <scope>VARIANTS GLU-152 AND ARG-251</scope>
    <source>
        <tissue>Testis</tissue>
    </source>
</reference>
<reference key="7">
    <citation type="journal article" date="2010" name="Cancer Res.">
        <title>Tumor-suppressive functions of leucine zipper transcription factor-like 1.</title>
        <authorList>
            <person name="Wei Q."/>
            <person name="Zhou W."/>
            <person name="Wang W."/>
            <person name="Gao B."/>
            <person name="Wang L."/>
            <person name="Cao J."/>
            <person name="Liu Z.P."/>
        </authorList>
    </citation>
    <scope>FUNCTION AS TUMOR SUPPRESSOR</scope>
    <scope>SUBCELLULAR LOCATION</scope>
    <scope>TISSUE SPECIFICITY</scope>
</reference>
<reference key="8">
    <citation type="journal article" date="2011" name="BMC Syst. Biol.">
        <title>Initial characterization of the human central proteome.</title>
        <authorList>
            <person name="Burkard T.R."/>
            <person name="Planyavsky M."/>
            <person name="Kaupe I."/>
            <person name="Breitwieser F.P."/>
            <person name="Buerckstuemmer T."/>
            <person name="Bennett K.L."/>
            <person name="Superti-Furga G."/>
            <person name="Colinge J."/>
        </authorList>
    </citation>
    <scope>IDENTIFICATION BY MASS SPECTROMETRY [LARGE SCALE ANALYSIS]</scope>
</reference>
<reference key="9">
    <citation type="journal article" date="2011" name="PLoS Genet.">
        <title>A novel protein LZTFL1 regulates ciliary trafficking of the BBSome and Smoothened.</title>
        <authorList>
            <person name="Seo S."/>
            <person name="Zhang Q."/>
            <person name="Bugge K."/>
            <person name="Breslow D.K."/>
            <person name="Searby C.C."/>
            <person name="Nachury M.V."/>
            <person name="Sheffield V.C."/>
        </authorList>
    </citation>
    <scope>FUNCTION</scope>
    <scope>SELF-ASSOCIATION</scope>
    <scope>INTERACTION WITH BBS9</scope>
    <scope>ASSOCIATION WITH THE BBSOME COMPLEX</scope>
    <scope>SUBCELLULAR LOCATION</scope>
    <scope>MUTAGENESIS OF 24-LYS-ARG-25</scope>
</reference>
<reference key="10">
    <citation type="journal article" date="2012" name="J. Med. Genet.">
        <title>Exome sequencing identifies mutations in LZTFL1, a BBSome and smoothened trafficking regulator, in a family with Bardet--Biedl syndrome with situs inversus and insertional polydactyly.</title>
        <authorList>
            <person name="Marion V."/>
            <person name="Stutzmann F."/>
            <person name="Gerard M."/>
            <person name="De Melo C."/>
            <person name="Schaefer E."/>
            <person name="Claussmann A."/>
            <person name="Helle S."/>
            <person name="Delague V."/>
            <person name="Souied E."/>
            <person name="Barrey C."/>
            <person name="Verloes A."/>
            <person name="Stoetzel C."/>
            <person name="Dollfus H."/>
        </authorList>
    </citation>
    <scope>FUNCTION IN SONIC HEDGEHOG PATHWAY</scope>
    <scope>INVOLVEMENT IN BBS17</scope>
</reference>
<reference key="11">
    <citation type="journal article" date="2014" name="Clin. Genet.">
        <title>Mesoaxial polydactyly is a major feature in Bardet-Biedl syndrome patients with LZTFL1 (BBS17) mutations.</title>
        <authorList>
            <person name="Schaefer E."/>
            <person name="Lauer J."/>
            <person name="Durand M."/>
            <person name="Pelletier V."/>
            <person name="Obringer C."/>
            <person name="Claussmann A."/>
            <person name="Braun J.J."/>
            <person name="Redin C."/>
            <person name="Mathis C."/>
            <person name="Muller J."/>
            <person name="Schmidt-Mutter C."/>
            <person name="Flori E."/>
            <person name="Marion V."/>
            <person name="Stoetzel C."/>
            <person name="Dollfus H."/>
        </authorList>
    </citation>
    <scope>VARIANT BBS17 PRO-87</scope>
</reference>
<name>LZTL1_HUMAN</name>